<organism>
    <name type="scientific">Mycoplasma mycoides subsp. mycoides SC (strain CCUG 32753 / NCTC 10114 / PG1)</name>
    <dbReference type="NCBI Taxonomy" id="272632"/>
    <lineage>
        <taxon>Bacteria</taxon>
        <taxon>Bacillati</taxon>
        <taxon>Mycoplasmatota</taxon>
        <taxon>Mollicutes</taxon>
        <taxon>Mycoplasmataceae</taxon>
        <taxon>Mycoplasma</taxon>
    </lineage>
</organism>
<feature type="chain" id="PRO_0000294278" description="GMP reductase">
    <location>
        <begin position="1"/>
        <end position="320"/>
    </location>
</feature>
<feature type="active site" description="Thioimidate intermediate" evidence="1">
    <location>
        <position position="174"/>
    </location>
</feature>
<feature type="binding site" evidence="1">
    <location>
        <begin position="203"/>
        <end position="226"/>
    </location>
    <ligand>
        <name>NADP(+)</name>
        <dbReference type="ChEBI" id="CHEBI:58349"/>
    </ligand>
</feature>
<accession>Q6MUI1</accession>
<gene>
    <name evidence="1" type="primary">guaC</name>
    <name type="ordered locus">MSC_0050</name>
</gene>
<name>GUAC_MYCMS</name>
<evidence type="ECO:0000255" key="1">
    <source>
        <dbReference type="HAMAP-Rule" id="MF_01511"/>
    </source>
</evidence>
<protein>
    <recommendedName>
        <fullName evidence="1">GMP reductase</fullName>
        <ecNumber evidence="1">1.7.1.7</ecNumber>
    </recommendedName>
    <alternativeName>
        <fullName evidence="1">Guanosine 5'-monophosphate oxidoreductase</fullName>
        <shortName evidence="1">Guanosine monophosphate reductase</shortName>
    </alternativeName>
</protein>
<sequence length="320" mass="35962">MKIFDYDDVQLIPEMCIVNSRKECETTATLGKHTFKLPVVPANMATIINEELAEKLARNDYFYIMHRFNVDQLKFIKNMKDKNLITSISLGVKPDEYKLVDQMVQQNLIPDYITIDIAHGHALSVKNMISYIREKMKDQVFIIAGNVTTPKAVRDLELWGADATKIEIGPGKVCITKLKTGFGTGGWQLSALKYCAKTASKPIIADGGLRVHGDIAKSIRMGASFCMIVSLFAAHLESPGKEVEINNCIYKEYYGSASEYNKSEKRYVEGKKELIKIRGSIFDTLKEMTEDLQSSISYAGGKDLQAIKRVDYVLLGDYKD</sequence>
<dbReference type="EC" id="1.7.1.7" evidence="1"/>
<dbReference type="EMBL" id="BX293980">
    <property type="protein sequence ID" value="CAE76703.1"/>
    <property type="molecule type" value="Genomic_DNA"/>
</dbReference>
<dbReference type="RefSeq" id="NP_975061.1">
    <property type="nucleotide sequence ID" value="NC_005364.2"/>
</dbReference>
<dbReference type="RefSeq" id="WP_011166261.1">
    <property type="nucleotide sequence ID" value="NC_005364.2"/>
</dbReference>
<dbReference type="SMR" id="Q6MUI1"/>
<dbReference type="STRING" id="272632.MSC_0050"/>
<dbReference type="KEGG" id="mmy:MSC_0050"/>
<dbReference type="PATRIC" id="fig|272632.4.peg.50"/>
<dbReference type="eggNOG" id="COG0516">
    <property type="taxonomic scope" value="Bacteria"/>
</dbReference>
<dbReference type="HOGENOM" id="CLU_022552_5_0_14"/>
<dbReference type="Proteomes" id="UP000001016">
    <property type="component" value="Chromosome"/>
</dbReference>
<dbReference type="GO" id="GO:0005829">
    <property type="term" value="C:cytosol"/>
    <property type="evidence" value="ECO:0007669"/>
    <property type="project" value="TreeGrafter"/>
</dbReference>
<dbReference type="GO" id="GO:1902560">
    <property type="term" value="C:GMP reductase complex"/>
    <property type="evidence" value="ECO:0007669"/>
    <property type="project" value="InterPro"/>
</dbReference>
<dbReference type="GO" id="GO:0003920">
    <property type="term" value="F:GMP reductase activity"/>
    <property type="evidence" value="ECO:0007669"/>
    <property type="project" value="UniProtKB-EC"/>
</dbReference>
<dbReference type="GO" id="GO:0006163">
    <property type="term" value="P:purine nucleotide metabolic process"/>
    <property type="evidence" value="ECO:0007669"/>
    <property type="project" value="InterPro"/>
</dbReference>
<dbReference type="CDD" id="cd00381">
    <property type="entry name" value="IMPDH"/>
    <property type="match status" value="1"/>
</dbReference>
<dbReference type="Gene3D" id="3.20.20.70">
    <property type="entry name" value="Aldolase class I"/>
    <property type="match status" value="1"/>
</dbReference>
<dbReference type="HAMAP" id="MF_01511">
    <property type="entry name" value="GMP_reduct_type2"/>
    <property type="match status" value="1"/>
</dbReference>
<dbReference type="InterPro" id="IPR013785">
    <property type="entry name" value="Aldolase_TIM"/>
</dbReference>
<dbReference type="InterPro" id="IPR050139">
    <property type="entry name" value="GMP_reductase"/>
</dbReference>
<dbReference type="InterPro" id="IPR005994">
    <property type="entry name" value="GuaC_type_2"/>
</dbReference>
<dbReference type="InterPro" id="IPR001093">
    <property type="entry name" value="IMP_DH_GMPRt"/>
</dbReference>
<dbReference type="NCBIfam" id="TIGR01306">
    <property type="entry name" value="GMP_reduct_2"/>
    <property type="match status" value="1"/>
</dbReference>
<dbReference type="NCBIfam" id="NF003966">
    <property type="entry name" value="PRK05458.1"/>
    <property type="match status" value="1"/>
</dbReference>
<dbReference type="PANTHER" id="PTHR43170">
    <property type="entry name" value="GMP REDUCTASE"/>
    <property type="match status" value="1"/>
</dbReference>
<dbReference type="PANTHER" id="PTHR43170:SF5">
    <property type="entry name" value="GMP REDUCTASE"/>
    <property type="match status" value="1"/>
</dbReference>
<dbReference type="Pfam" id="PF00478">
    <property type="entry name" value="IMPDH"/>
    <property type="match status" value="1"/>
</dbReference>
<dbReference type="PIRSF" id="PIRSF036500">
    <property type="entry name" value="GMP_red_Firmic"/>
    <property type="match status" value="1"/>
</dbReference>
<dbReference type="SMART" id="SM01240">
    <property type="entry name" value="IMPDH"/>
    <property type="match status" value="1"/>
</dbReference>
<dbReference type="SUPFAM" id="SSF51412">
    <property type="entry name" value="Inosine monophosphate dehydrogenase (IMPDH)"/>
    <property type="match status" value="1"/>
</dbReference>
<keyword id="KW-0521">NADP</keyword>
<keyword id="KW-0560">Oxidoreductase</keyword>
<keyword id="KW-1185">Reference proteome</keyword>
<reference key="1">
    <citation type="journal article" date="2004" name="Genome Res.">
        <title>The genome sequence of Mycoplasma mycoides subsp. mycoides SC type strain PG1T, the causative agent of contagious bovine pleuropneumonia (CBPP).</title>
        <authorList>
            <person name="Westberg J."/>
            <person name="Persson A."/>
            <person name="Holmberg A."/>
            <person name="Goesmann A."/>
            <person name="Lundeberg J."/>
            <person name="Johansson K.-E."/>
            <person name="Pettersson B."/>
            <person name="Uhlen M."/>
        </authorList>
    </citation>
    <scope>NUCLEOTIDE SEQUENCE [LARGE SCALE GENOMIC DNA]</scope>
    <source>
        <strain>CCUG 32753 / NCTC 10114 / PG1</strain>
    </source>
</reference>
<comment type="function">
    <text evidence="1">Catalyzes the irreversible NADPH-dependent deamination of GMP to IMP. It functions in the conversion of nucleobase, nucleoside and nucleotide derivatives of G to A nucleotides, and in maintaining the intracellular balance of A and G nucleotides.</text>
</comment>
<comment type="catalytic activity">
    <reaction evidence="1">
        <text>IMP + NH4(+) + NADP(+) = GMP + NADPH + 2 H(+)</text>
        <dbReference type="Rhea" id="RHEA:17185"/>
        <dbReference type="ChEBI" id="CHEBI:15378"/>
        <dbReference type="ChEBI" id="CHEBI:28938"/>
        <dbReference type="ChEBI" id="CHEBI:57783"/>
        <dbReference type="ChEBI" id="CHEBI:58053"/>
        <dbReference type="ChEBI" id="CHEBI:58115"/>
        <dbReference type="ChEBI" id="CHEBI:58349"/>
        <dbReference type="EC" id="1.7.1.7"/>
    </reaction>
</comment>
<comment type="similarity">
    <text evidence="1">Belongs to the IMPDH/GMPR family. GuaC type 2 subfamily.</text>
</comment>
<proteinExistence type="inferred from homology"/>